<comment type="function">
    <text evidence="1">E1-like enzyme which activates UFM1.</text>
</comment>
<comment type="subunit">
    <text evidence="1">Interacts (via C-terminus) with Ufc1. Interacts with Ufm1.</text>
</comment>
<comment type="subcellular location">
    <subcellularLocation>
        <location evidence="1">Cytoplasm</location>
    </subcellularLocation>
    <subcellularLocation>
        <location evidence="1">Nucleus</location>
    </subcellularLocation>
    <subcellularLocation>
        <location evidence="1">Golgi apparatus</location>
    </subcellularLocation>
</comment>
<comment type="developmental stage">
    <text evidence="6">Expression in the adult brain declines with age.</text>
</comment>
<comment type="disruption phenotype">
    <text evidence="5 6">RNAi-mediated knockdown shows aberrant neuromuscular junctions in the larval muscle and abnormal wings, locomotive defects and a shortened lifespan in the adult fly (PubMed:26872069). RNAi-mediated knockdown in the nervous system results also in aberrant neuromuscular junctions characterized by reduced number of type Ib boutons and increased bouton size in the larval muscle (PubMed:26872069). RNAi-mediated knockdown in adult neuronal tissue results in reduced adult lifespan and progressive locomoter defects due to neurodegeneration, when in combination with knockdown of Ufl1; brains show evidence of increased ER stress (PubMed:37086384). Neuronal cells in these adults display defects in autophagy (PubMed:37086384).</text>
</comment>
<comment type="similarity">
    <text evidence="1">Belongs to the ubiquitin-activating E1 family. UBA5 subfamily.</text>
</comment>
<comment type="sequence caution" evidence="8">
    <conflict type="frameshift">
        <sequence resource="EMBL-CDS" id="AAL49051"/>
    </conflict>
</comment>
<evidence type="ECO:0000250" key="1">
    <source>
        <dbReference type="UniProtKB" id="Q9GZZ9"/>
    </source>
</evidence>
<evidence type="ECO:0000256" key="2">
    <source>
        <dbReference type="SAM" id="MobiDB-lite"/>
    </source>
</evidence>
<evidence type="ECO:0000269" key="3">
    <source>
    </source>
</evidence>
<evidence type="ECO:0000269" key="4">
    <source>
    </source>
</evidence>
<evidence type="ECO:0000269" key="5">
    <source>
    </source>
</evidence>
<evidence type="ECO:0000269" key="6">
    <source>
    </source>
</evidence>
<evidence type="ECO:0000303" key="7">
    <source>
    </source>
</evidence>
<evidence type="ECO:0000305" key="8"/>
<evidence type="ECO:0000312" key="9">
    <source>
        <dbReference type="FlyBase" id="FBgn0030305"/>
    </source>
</evidence>
<accession>Q9VYY3</accession>
<accession>B4F5S5</accession>
<accession>B4F5S6</accession>
<accession>B4F5S7</accession>
<accession>B4F5S8</accession>
<accession>B4F5S9</accession>
<accession>B4F5T0</accession>
<accession>B4F5T1</accession>
<accession>B4F5T3</accession>
<accession>C0MLQ2</accession>
<accession>C0MLQ9</accession>
<accession>C0MLR0</accession>
<accession>Q8SYN2</accession>
<reference key="1">
    <citation type="journal article" date="2008" name="Mol. Biol. Evol.">
        <title>Effects of X-linkage and sex-biased gene expression on the rate of adaptive protein evolution in Drosophila.</title>
        <authorList>
            <person name="Baines J.F."/>
            <person name="Sawyer S.A."/>
            <person name="Hartl D.L."/>
            <person name="Parsch J."/>
        </authorList>
    </citation>
    <scope>NUCLEOTIDE SEQUENCE [GENOMIC DNA]</scope>
    <scope>VARIANTS SER-17; LEU-GLU-THR-GLU-22 INS; ASP-73; SER-163; GLN-169; 309-LEU-VAL-310 DELINS ILE-ILE; ILE-309; SER-333; ARG-335 AND THR-385</scope>
    <source>
        <strain>ZBMEL145</strain>
        <strain>ZBMEL157</strain>
        <strain>ZBMEL186</strain>
        <strain>ZBMEL191</strain>
        <strain>ZBMEL229</strain>
        <strain>ZBMEL377</strain>
        <strain>ZBMEL384</strain>
        <strain>ZBMEL398</strain>
        <strain>ZBMEL84</strain>
        <strain>ZBMEL95</strain>
    </source>
</reference>
<reference key="2">
    <citation type="journal article" date="2009" name="Mol. Biol. Evol.">
        <title>The influence of demography and weak selection on the McDonald-Kreitman test: an empirical study in Drosophila.</title>
        <authorList>
            <person name="Parsch J."/>
            <person name="Zhang Z."/>
            <person name="Baines J.F."/>
        </authorList>
    </citation>
    <scope>NUCLEOTIDE SEQUENCE [GENOMIC DNA]</scope>
    <scope>VARIANTS ASP-73; LYS-325 AND GLN-364</scope>
    <source>
        <strain>MEL01</strain>
        <strain>MEL02</strain>
        <strain>MEL11</strain>
        <strain>MEL12</strain>
        <strain>MEL13</strain>
        <strain>MEL14</strain>
        <strain>MEL15</strain>
        <strain>MEL16</strain>
        <strain>MEL17</strain>
        <strain>MEL18</strain>
        <strain>MEL19</strain>
        <strain>MEL20</strain>
    </source>
</reference>
<reference key="3">
    <citation type="journal article" date="2000" name="Science">
        <title>The genome sequence of Drosophila melanogaster.</title>
        <authorList>
            <person name="Adams M.D."/>
            <person name="Celniker S.E."/>
            <person name="Holt R.A."/>
            <person name="Evans C.A."/>
            <person name="Gocayne J.D."/>
            <person name="Amanatides P.G."/>
            <person name="Scherer S.E."/>
            <person name="Li P.W."/>
            <person name="Hoskins R.A."/>
            <person name="Galle R.F."/>
            <person name="George R.A."/>
            <person name="Lewis S.E."/>
            <person name="Richards S."/>
            <person name="Ashburner M."/>
            <person name="Henderson S.N."/>
            <person name="Sutton G.G."/>
            <person name="Wortman J.R."/>
            <person name="Yandell M.D."/>
            <person name="Zhang Q."/>
            <person name="Chen L.X."/>
            <person name="Brandon R.C."/>
            <person name="Rogers Y.-H.C."/>
            <person name="Blazej R.G."/>
            <person name="Champe M."/>
            <person name="Pfeiffer B.D."/>
            <person name="Wan K.H."/>
            <person name="Doyle C."/>
            <person name="Baxter E.G."/>
            <person name="Helt G."/>
            <person name="Nelson C.R."/>
            <person name="Miklos G.L.G."/>
            <person name="Abril J.F."/>
            <person name="Agbayani A."/>
            <person name="An H.-J."/>
            <person name="Andrews-Pfannkoch C."/>
            <person name="Baldwin D."/>
            <person name="Ballew R.M."/>
            <person name="Basu A."/>
            <person name="Baxendale J."/>
            <person name="Bayraktaroglu L."/>
            <person name="Beasley E.M."/>
            <person name="Beeson K.Y."/>
            <person name="Benos P.V."/>
            <person name="Berman B.P."/>
            <person name="Bhandari D."/>
            <person name="Bolshakov S."/>
            <person name="Borkova D."/>
            <person name="Botchan M.R."/>
            <person name="Bouck J."/>
            <person name="Brokstein P."/>
            <person name="Brottier P."/>
            <person name="Burtis K.C."/>
            <person name="Busam D.A."/>
            <person name="Butler H."/>
            <person name="Cadieu E."/>
            <person name="Center A."/>
            <person name="Chandra I."/>
            <person name="Cherry J.M."/>
            <person name="Cawley S."/>
            <person name="Dahlke C."/>
            <person name="Davenport L.B."/>
            <person name="Davies P."/>
            <person name="de Pablos B."/>
            <person name="Delcher A."/>
            <person name="Deng Z."/>
            <person name="Mays A.D."/>
            <person name="Dew I."/>
            <person name="Dietz S.M."/>
            <person name="Dodson K."/>
            <person name="Doup L.E."/>
            <person name="Downes M."/>
            <person name="Dugan-Rocha S."/>
            <person name="Dunkov B.C."/>
            <person name="Dunn P."/>
            <person name="Durbin K.J."/>
            <person name="Evangelista C.C."/>
            <person name="Ferraz C."/>
            <person name="Ferriera S."/>
            <person name="Fleischmann W."/>
            <person name="Fosler C."/>
            <person name="Gabrielian A.E."/>
            <person name="Garg N.S."/>
            <person name="Gelbart W.M."/>
            <person name="Glasser K."/>
            <person name="Glodek A."/>
            <person name="Gong F."/>
            <person name="Gorrell J.H."/>
            <person name="Gu Z."/>
            <person name="Guan P."/>
            <person name="Harris M."/>
            <person name="Harris N.L."/>
            <person name="Harvey D.A."/>
            <person name="Heiman T.J."/>
            <person name="Hernandez J.R."/>
            <person name="Houck J."/>
            <person name="Hostin D."/>
            <person name="Houston K.A."/>
            <person name="Howland T.J."/>
            <person name="Wei M.-H."/>
            <person name="Ibegwam C."/>
            <person name="Jalali M."/>
            <person name="Kalush F."/>
            <person name="Karpen G.H."/>
            <person name="Ke Z."/>
            <person name="Kennison J.A."/>
            <person name="Ketchum K.A."/>
            <person name="Kimmel B.E."/>
            <person name="Kodira C.D."/>
            <person name="Kraft C.L."/>
            <person name="Kravitz S."/>
            <person name="Kulp D."/>
            <person name="Lai Z."/>
            <person name="Lasko P."/>
            <person name="Lei Y."/>
            <person name="Levitsky A.A."/>
            <person name="Li J.H."/>
            <person name="Li Z."/>
            <person name="Liang Y."/>
            <person name="Lin X."/>
            <person name="Liu X."/>
            <person name="Mattei B."/>
            <person name="McIntosh T.C."/>
            <person name="McLeod M.P."/>
            <person name="McPherson D."/>
            <person name="Merkulov G."/>
            <person name="Milshina N.V."/>
            <person name="Mobarry C."/>
            <person name="Morris J."/>
            <person name="Moshrefi A."/>
            <person name="Mount S.M."/>
            <person name="Moy M."/>
            <person name="Murphy B."/>
            <person name="Murphy L."/>
            <person name="Muzny D.M."/>
            <person name="Nelson D.L."/>
            <person name="Nelson D.R."/>
            <person name="Nelson K.A."/>
            <person name="Nixon K."/>
            <person name="Nusskern D.R."/>
            <person name="Pacleb J.M."/>
            <person name="Palazzolo M."/>
            <person name="Pittman G.S."/>
            <person name="Pan S."/>
            <person name="Pollard J."/>
            <person name="Puri V."/>
            <person name="Reese M.G."/>
            <person name="Reinert K."/>
            <person name="Remington K."/>
            <person name="Saunders R.D.C."/>
            <person name="Scheeler F."/>
            <person name="Shen H."/>
            <person name="Shue B.C."/>
            <person name="Siden-Kiamos I."/>
            <person name="Simpson M."/>
            <person name="Skupski M.P."/>
            <person name="Smith T.J."/>
            <person name="Spier E."/>
            <person name="Spradling A.C."/>
            <person name="Stapleton M."/>
            <person name="Strong R."/>
            <person name="Sun E."/>
            <person name="Svirskas R."/>
            <person name="Tector C."/>
            <person name="Turner R."/>
            <person name="Venter E."/>
            <person name="Wang A.H."/>
            <person name="Wang X."/>
            <person name="Wang Z.-Y."/>
            <person name="Wassarman D.A."/>
            <person name="Weinstock G.M."/>
            <person name="Weissenbach J."/>
            <person name="Williams S.M."/>
            <person name="Woodage T."/>
            <person name="Worley K.C."/>
            <person name="Wu D."/>
            <person name="Yang S."/>
            <person name="Yao Q.A."/>
            <person name="Ye J."/>
            <person name="Yeh R.-F."/>
            <person name="Zaveri J.S."/>
            <person name="Zhan M."/>
            <person name="Zhang G."/>
            <person name="Zhao Q."/>
            <person name="Zheng L."/>
            <person name="Zheng X.H."/>
            <person name="Zhong F.N."/>
            <person name="Zhong W."/>
            <person name="Zhou X."/>
            <person name="Zhu S.C."/>
            <person name="Zhu X."/>
            <person name="Smith H.O."/>
            <person name="Gibbs R.A."/>
            <person name="Myers E.W."/>
            <person name="Rubin G.M."/>
            <person name="Venter J.C."/>
        </authorList>
    </citation>
    <scope>NUCLEOTIDE SEQUENCE [LARGE SCALE GENOMIC DNA]</scope>
    <source>
        <strain>Berkeley</strain>
    </source>
</reference>
<reference key="4">
    <citation type="journal article" date="2002" name="Genome Biol.">
        <title>Annotation of the Drosophila melanogaster euchromatic genome: a systematic review.</title>
        <authorList>
            <person name="Misra S."/>
            <person name="Crosby M.A."/>
            <person name="Mungall C.J."/>
            <person name="Matthews B.B."/>
            <person name="Campbell K.S."/>
            <person name="Hradecky P."/>
            <person name="Huang Y."/>
            <person name="Kaminker J.S."/>
            <person name="Millburn G.H."/>
            <person name="Prochnik S.E."/>
            <person name="Smith C.D."/>
            <person name="Tupy J.L."/>
            <person name="Whitfield E.J."/>
            <person name="Bayraktaroglu L."/>
            <person name="Berman B.P."/>
            <person name="Bettencourt B.R."/>
            <person name="Celniker S.E."/>
            <person name="de Grey A.D.N.J."/>
            <person name="Drysdale R.A."/>
            <person name="Harris N.L."/>
            <person name="Richter J."/>
            <person name="Russo S."/>
            <person name="Schroeder A.J."/>
            <person name="Shu S.Q."/>
            <person name="Stapleton M."/>
            <person name="Yamada C."/>
            <person name="Ashburner M."/>
            <person name="Gelbart W.M."/>
            <person name="Rubin G.M."/>
            <person name="Lewis S.E."/>
        </authorList>
    </citation>
    <scope>GENOME REANNOTATION</scope>
    <source>
        <strain>Berkeley</strain>
    </source>
</reference>
<reference key="5">
    <citation type="journal article" date="2002" name="Genome Biol.">
        <title>A Drosophila full-length cDNA resource.</title>
        <authorList>
            <person name="Stapleton M."/>
            <person name="Carlson J.W."/>
            <person name="Brokstein P."/>
            <person name="Yu C."/>
            <person name="Champe M."/>
            <person name="George R.A."/>
            <person name="Guarin H."/>
            <person name="Kronmiller B."/>
            <person name="Pacleb J.M."/>
            <person name="Park S."/>
            <person name="Wan K.H."/>
            <person name="Rubin G.M."/>
            <person name="Celniker S.E."/>
        </authorList>
    </citation>
    <scope>NUCLEOTIDE SEQUENCE [LARGE SCALE MRNA]</scope>
    <source>
        <strain>Berkeley</strain>
        <tissue>Embryo</tissue>
    </source>
</reference>
<reference key="6">
    <citation type="journal article" date="2016" name="PLoS ONE">
        <title>UBA5 mutations cause a new form of autosomal recessive cerebellar ataxia.</title>
        <authorList>
            <person name="Duan R."/>
            <person name="Shi Y."/>
            <person name="Yu L."/>
            <person name="Zhang G."/>
            <person name="Li J."/>
            <person name="Lin Y."/>
            <person name="Guo J."/>
            <person name="Wang J."/>
            <person name="Shen L."/>
            <person name="Jiang H."/>
            <person name="Wang G."/>
            <person name="Tang B."/>
        </authorList>
    </citation>
    <scope>DISRUPTION PHENOTYPE</scope>
</reference>
<reference key="7">
    <citation type="journal article" date="2023" name="Cell. Mol. Life Sci.">
        <title>A neuroprotective role of Ufmylation through Atg9 in the aging brain of Drosophila.</title>
        <authorList>
            <person name="Li H."/>
            <person name="Yu Z."/>
            <person name="Niu Z."/>
            <person name="Cheng Y."/>
            <person name="Wei Z."/>
            <person name="Cai Y."/>
            <person name="Ma F."/>
            <person name="Hu L."/>
            <person name="Zhu J."/>
            <person name="Zhang W."/>
        </authorList>
    </citation>
    <scope>DEVELOPMENTAL STAGE</scope>
    <scope>DISRUPTION PHENOTYPE</scope>
</reference>
<dbReference type="EMBL" id="AM999161">
    <property type="protein sequence ID" value="CAQ53523.1"/>
    <property type="molecule type" value="Genomic_DNA"/>
</dbReference>
<dbReference type="EMBL" id="AM999162">
    <property type="protein sequence ID" value="CAQ53524.1"/>
    <property type="molecule type" value="Genomic_DNA"/>
</dbReference>
<dbReference type="EMBL" id="AM999163">
    <property type="protein sequence ID" value="CAQ53525.1"/>
    <property type="molecule type" value="Genomic_DNA"/>
</dbReference>
<dbReference type="EMBL" id="AM999164">
    <property type="protein sequence ID" value="CAQ53526.1"/>
    <property type="molecule type" value="Genomic_DNA"/>
</dbReference>
<dbReference type="EMBL" id="AM999165">
    <property type="protein sequence ID" value="CAQ53527.1"/>
    <property type="molecule type" value="Genomic_DNA"/>
</dbReference>
<dbReference type="EMBL" id="AM999166">
    <property type="protein sequence ID" value="CAQ53528.1"/>
    <property type="molecule type" value="Genomic_DNA"/>
</dbReference>
<dbReference type="EMBL" id="AM999167">
    <property type="protein sequence ID" value="CAQ53529.1"/>
    <property type="molecule type" value="Genomic_DNA"/>
</dbReference>
<dbReference type="EMBL" id="AM999168">
    <property type="protein sequence ID" value="CAQ53530.1"/>
    <property type="molecule type" value="Genomic_DNA"/>
</dbReference>
<dbReference type="EMBL" id="AM999169">
    <property type="protein sequence ID" value="CAQ53531.1"/>
    <property type="molecule type" value="Genomic_DNA"/>
</dbReference>
<dbReference type="EMBL" id="AM999170">
    <property type="protein sequence ID" value="CAQ53532.1"/>
    <property type="molecule type" value="Genomic_DNA"/>
</dbReference>
<dbReference type="EMBL" id="FM246273">
    <property type="protein sequence ID" value="CAR94199.1"/>
    <property type="molecule type" value="Genomic_DNA"/>
</dbReference>
<dbReference type="EMBL" id="FM246274">
    <property type="protein sequence ID" value="CAR94200.1"/>
    <property type="molecule type" value="Genomic_DNA"/>
</dbReference>
<dbReference type="EMBL" id="FM246275">
    <property type="protein sequence ID" value="CAR94201.1"/>
    <property type="molecule type" value="Genomic_DNA"/>
</dbReference>
<dbReference type="EMBL" id="FM246276">
    <property type="protein sequence ID" value="CAR94202.1"/>
    <property type="molecule type" value="Genomic_DNA"/>
</dbReference>
<dbReference type="EMBL" id="FM246277">
    <property type="protein sequence ID" value="CAR94203.1"/>
    <property type="molecule type" value="Genomic_DNA"/>
</dbReference>
<dbReference type="EMBL" id="FM246278">
    <property type="protein sequence ID" value="CAR94204.1"/>
    <property type="molecule type" value="Genomic_DNA"/>
</dbReference>
<dbReference type="EMBL" id="FM246279">
    <property type="protein sequence ID" value="CAR94205.1"/>
    <property type="molecule type" value="Genomic_DNA"/>
</dbReference>
<dbReference type="EMBL" id="FM246280">
    <property type="protein sequence ID" value="CAR94206.1"/>
    <property type="molecule type" value="Genomic_DNA"/>
</dbReference>
<dbReference type="EMBL" id="FM246281">
    <property type="protein sequence ID" value="CAR94207.1"/>
    <property type="molecule type" value="Genomic_DNA"/>
</dbReference>
<dbReference type="EMBL" id="FM246282">
    <property type="protein sequence ID" value="CAR94208.1"/>
    <property type="molecule type" value="Genomic_DNA"/>
</dbReference>
<dbReference type="EMBL" id="FM246283">
    <property type="protein sequence ID" value="CAR94209.1"/>
    <property type="molecule type" value="Genomic_DNA"/>
</dbReference>
<dbReference type="EMBL" id="FM246284">
    <property type="protein sequence ID" value="CAR94210.1"/>
    <property type="molecule type" value="Genomic_DNA"/>
</dbReference>
<dbReference type="EMBL" id="AE014298">
    <property type="protein sequence ID" value="AAF48050.1"/>
    <property type="molecule type" value="Genomic_DNA"/>
</dbReference>
<dbReference type="EMBL" id="AY071429">
    <property type="protein sequence ID" value="AAL49051.1"/>
    <property type="status" value="ALT_FRAME"/>
    <property type="molecule type" value="mRNA"/>
</dbReference>
<dbReference type="RefSeq" id="NP_572722.2">
    <property type="nucleotide sequence ID" value="NM_132494.3"/>
</dbReference>
<dbReference type="SMR" id="Q9VYY3"/>
<dbReference type="BioGRID" id="58505">
    <property type="interactions" value="4"/>
</dbReference>
<dbReference type="FunCoup" id="Q9VYY3">
    <property type="interactions" value="2417"/>
</dbReference>
<dbReference type="IntAct" id="Q9VYY3">
    <property type="interactions" value="57"/>
</dbReference>
<dbReference type="STRING" id="7227.FBpp0073354"/>
<dbReference type="GlyGen" id="Q9VYY3">
    <property type="glycosylation" value="1 site, 1 O-linked glycan (1 site)"/>
</dbReference>
<dbReference type="PaxDb" id="7227-FBpp0073354"/>
<dbReference type="DNASU" id="32094"/>
<dbReference type="EnsemblMetazoa" id="FBtr0073505">
    <property type="protein sequence ID" value="FBpp0073354"/>
    <property type="gene ID" value="FBgn0030305"/>
</dbReference>
<dbReference type="GeneID" id="32094"/>
<dbReference type="KEGG" id="dme:Dmel_CG1749"/>
<dbReference type="UCSC" id="CG1749-RA">
    <property type="organism name" value="d. melanogaster"/>
</dbReference>
<dbReference type="AGR" id="FB:FBgn0030305"/>
<dbReference type="CTD" id="79876"/>
<dbReference type="FlyBase" id="FBgn0030305">
    <property type="gene designation" value="Uba5"/>
</dbReference>
<dbReference type="VEuPathDB" id="VectorBase:FBgn0030305"/>
<dbReference type="eggNOG" id="KOG2336">
    <property type="taxonomic scope" value="Eukaryota"/>
</dbReference>
<dbReference type="HOGENOM" id="CLU_013325_0_1_1"/>
<dbReference type="InParanoid" id="Q9VYY3"/>
<dbReference type="OMA" id="MNIVKDY"/>
<dbReference type="OrthoDB" id="206053at2759"/>
<dbReference type="PhylomeDB" id="Q9VYY3"/>
<dbReference type="Reactome" id="R-DME-983168">
    <property type="pathway name" value="Antigen processing: Ubiquitination &amp; Proteasome degradation"/>
</dbReference>
<dbReference type="BioGRID-ORCS" id="32094">
    <property type="hits" value="1 hit in 1 CRISPR screen"/>
</dbReference>
<dbReference type="GenomeRNAi" id="32094"/>
<dbReference type="PRO" id="PR:Q9VYY3"/>
<dbReference type="Proteomes" id="UP000000803">
    <property type="component" value="Chromosome X"/>
</dbReference>
<dbReference type="Bgee" id="FBgn0030305">
    <property type="expression patterns" value="Expressed in spermathecum and 88 other cell types or tissues"/>
</dbReference>
<dbReference type="ExpressionAtlas" id="Q9VYY3">
    <property type="expression patterns" value="baseline and differential"/>
</dbReference>
<dbReference type="GO" id="GO:0005737">
    <property type="term" value="C:cytoplasm"/>
    <property type="evidence" value="ECO:0000250"/>
    <property type="project" value="FlyBase"/>
</dbReference>
<dbReference type="GO" id="GO:0005829">
    <property type="term" value="C:cytosol"/>
    <property type="evidence" value="ECO:0000318"/>
    <property type="project" value="GO_Central"/>
</dbReference>
<dbReference type="GO" id="GO:0005794">
    <property type="term" value="C:Golgi apparatus"/>
    <property type="evidence" value="ECO:0007669"/>
    <property type="project" value="UniProtKB-SubCell"/>
</dbReference>
<dbReference type="GO" id="GO:0005634">
    <property type="term" value="C:nucleus"/>
    <property type="evidence" value="ECO:0007669"/>
    <property type="project" value="UniProtKB-SubCell"/>
</dbReference>
<dbReference type="GO" id="GO:0005524">
    <property type="term" value="F:ATP binding"/>
    <property type="evidence" value="ECO:0007669"/>
    <property type="project" value="UniProtKB-KW"/>
</dbReference>
<dbReference type="GO" id="GO:0046872">
    <property type="term" value="F:metal ion binding"/>
    <property type="evidence" value="ECO:0007669"/>
    <property type="project" value="UniProtKB-KW"/>
</dbReference>
<dbReference type="GO" id="GO:0071566">
    <property type="term" value="F:UFM1 activating enzyme activity"/>
    <property type="evidence" value="ECO:0000250"/>
    <property type="project" value="FlyBase"/>
</dbReference>
<dbReference type="GO" id="GO:0050905">
    <property type="term" value="P:neuromuscular process"/>
    <property type="evidence" value="ECO:0000315"/>
    <property type="project" value="UniProtKB"/>
</dbReference>
<dbReference type="GO" id="GO:0071569">
    <property type="term" value="P:protein ufmylation"/>
    <property type="evidence" value="ECO:0000250"/>
    <property type="project" value="FlyBase"/>
</dbReference>
<dbReference type="CDD" id="cd00757">
    <property type="entry name" value="ThiF_MoeB_HesA_family"/>
    <property type="match status" value="1"/>
</dbReference>
<dbReference type="FunFam" id="3.40.50.720:FF:000066">
    <property type="entry name" value="Putative ubiquitin-like modifier-activating enzyme 5"/>
    <property type="match status" value="1"/>
</dbReference>
<dbReference type="Gene3D" id="3.40.50.720">
    <property type="entry name" value="NAD(P)-binding Rossmann-like Domain"/>
    <property type="match status" value="1"/>
</dbReference>
<dbReference type="InterPro" id="IPR029752">
    <property type="entry name" value="D-isomer_DH_CS1"/>
</dbReference>
<dbReference type="InterPro" id="IPR045886">
    <property type="entry name" value="ThiF/MoeB/HesA"/>
</dbReference>
<dbReference type="InterPro" id="IPR000594">
    <property type="entry name" value="ThiF_NAD_FAD-bd"/>
</dbReference>
<dbReference type="InterPro" id="IPR035985">
    <property type="entry name" value="Ubiquitin-activating_enz"/>
</dbReference>
<dbReference type="PANTHER" id="PTHR10953">
    <property type="entry name" value="UBIQUITIN-ACTIVATING ENZYME E1"/>
    <property type="match status" value="1"/>
</dbReference>
<dbReference type="PANTHER" id="PTHR10953:SF9">
    <property type="entry name" value="UBIQUITIN-LIKE MODIFIER-ACTIVATING ENZYME 5"/>
    <property type="match status" value="1"/>
</dbReference>
<dbReference type="Pfam" id="PF00899">
    <property type="entry name" value="ThiF"/>
    <property type="match status" value="1"/>
</dbReference>
<dbReference type="SUPFAM" id="SSF69572">
    <property type="entry name" value="Activating enzymes of the ubiquitin-like proteins"/>
    <property type="match status" value="1"/>
</dbReference>
<gene>
    <name evidence="7 9" type="primary">Uba5</name>
    <name evidence="9" type="ORF">CG1749</name>
</gene>
<proteinExistence type="evidence at transcript level"/>
<feature type="chain" id="PRO_0000391944" description="Ubiquitin-like modifier-activating enzyme 5">
    <location>
        <begin position="1"/>
        <end position="404"/>
    </location>
</feature>
<feature type="region of interest" description="Disordered" evidence="2">
    <location>
        <begin position="372"/>
        <end position="404"/>
    </location>
</feature>
<feature type="compositionally biased region" description="Low complexity" evidence="2">
    <location>
        <begin position="382"/>
        <end position="391"/>
    </location>
</feature>
<feature type="active site" description="Glycyl thioester intermediate" evidence="1">
    <location>
        <position position="250"/>
    </location>
</feature>
<feature type="binding site" evidence="1">
    <location>
        <position position="83"/>
    </location>
    <ligand>
        <name>ATP</name>
        <dbReference type="ChEBI" id="CHEBI:30616"/>
    </ligand>
</feature>
<feature type="binding site" evidence="1">
    <location>
        <position position="104"/>
    </location>
    <ligand>
        <name>ATP</name>
        <dbReference type="ChEBI" id="CHEBI:30616"/>
    </ligand>
</feature>
<feature type="binding site" evidence="1">
    <location>
        <position position="127"/>
    </location>
    <ligand>
        <name>ATP</name>
        <dbReference type="ChEBI" id="CHEBI:30616"/>
    </ligand>
</feature>
<feature type="binding site" evidence="1">
    <location>
        <position position="150"/>
    </location>
    <ligand>
        <name>ATP</name>
        <dbReference type="ChEBI" id="CHEBI:30616"/>
    </ligand>
</feature>
<feature type="binding site" evidence="1">
    <location>
        <position position="184"/>
    </location>
    <ligand>
        <name>ATP</name>
        <dbReference type="ChEBI" id="CHEBI:30616"/>
    </ligand>
</feature>
<feature type="binding site" evidence="1">
    <location>
        <position position="226"/>
    </location>
    <ligand>
        <name>Zn(2+)</name>
        <dbReference type="ChEBI" id="CHEBI:29105"/>
    </ligand>
</feature>
<feature type="binding site" evidence="1">
    <location>
        <position position="229"/>
    </location>
    <ligand>
        <name>Zn(2+)</name>
        <dbReference type="ChEBI" id="CHEBI:29105"/>
    </ligand>
</feature>
<feature type="binding site" evidence="1">
    <location>
        <position position="303"/>
    </location>
    <ligand>
        <name>Zn(2+)</name>
        <dbReference type="ChEBI" id="CHEBI:29105"/>
    </ligand>
</feature>
<feature type="binding site" evidence="1">
    <location>
        <position position="308"/>
    </location>
    <ligand>
        <name>Zn(2+)</name>
        <dbReference type="ChEBI" id="CHEBI:29105"/>
    </ligand>
</feature>
<feature type="sequence variant" description="In strain: ZBMEL157 and ZBMEL377." evidence="3">
    <original>T</original>
    <variation>S</variation>
    <location>
        <position position="17"/>
    </location>
</feature>
<feature type="sequence variant" description="In strain: ZBMEL186 and ZBMEL191." evidence="3">
    <original>E</original>
    <variation>ELETE</variation>
    <location>
        <position position="22"/>
    </location>
</feature>
<feature type="sequence variant" description="In strain: MEL02, ZBMEL84, ZBMEL145, ZBMEL157, ZBMEL186, ZBMEL191, ZBMEL229, ZBMEL377, ZBMEL384 and ZBMEL398." evidence="3 4">
    <original>Y</original>
    <variation>D</variation>
    <location>
        <position position="73"/>
    </location>
</feature>
<feature type="sequence variant" description="In strain: ZBMEL95." evidence="3">
    <original>T</original>
    <variation>S</variation>
    <location>
        <position position="163"/>
    </location>
</feature>
<feature type="sequence variant" description="In strain: ZBMEL229." evidence="3">
    <original>R</original>
    <variation>Q</variation>
    <location>
        <position position="169"/>
    </location>
</feature>
<feature type="sequence variant" description="In strain: ZBMEL145, ZBMEL191." evidence="3">
    <original>LV</original>
    <variation>II</variation>
    <location>
        <begin position="309"/>
        <end position="310"/>
    </location>
</feature>
<feature type="sequence variant" description="In strain: ZBMEL84, ZBMEL384 and ZBMEL398." evidence="3">
    <original>L</original>
    <variation>I</variation>
    <location>
        <position position="309"/>
    </location>
</feature>
<feature type="sequence variant" description="In strain: MEL18." evidence="4">
    <original>E</original>
    <variation>K</variation>
    <location>
        <position position="325"/>
    </location>
</feature>
<feature type="sequence variant" description="In strain: ZBMEL384." evidence="3">
    <original>P</original>
    <variation>S</variation>
    <location>
        <position position="333"/>
    </location>
</feature>
<feature type="sequence variant" description="In strain: ZBMEL186." evidence="3">
    <original>H</original>
    <variation>R</variation>
    <location>
        <position position="335"/>
    </location>
</feature>
<feature type="sequence variant" description="In strain: MEL17." evidence="4">
    <original>E</original>
    <variation>Q</variation>
    <location>
        <position position="364"/>
    </location>
</feature>
<feature type="sequence variant" description="In strain: ZBMEL186 and ZBMEL384." evidence="3">
    <original>S</original>
    <variation>T</variation>
    <location>
        <position position="385"/>
    </location>
</feature>
<feature type="sequence conflict" description="In Ref. 5; AAL49051." evidence="8" ref="5">
    <original>L</original>
    <variation>M</variation>
    <location>
        <position position="177"/>
    </location>
</feature>
<name>UBA5_DROME</name>
<organism>
    <name type="scientific">Drosophila melanogaster</name>
    <name type="common">Fruit fly</name>
    <dbReference type="NCBI Taxonomy" id="7227"/>
    <lineage>
        <taxon>Eukaryota</taxon>
        <taxon>Metazoa</taxon>
        <taxon>Ecdysozoa</taxon>
        <taxon>Arthropoda</taxon>
        <taxon>Hexapoda</taxon>
        <taxon>Insecta</taxon>
        <taxon>Pterygota</taxon>
        <taxon>Neoptera</taxon>
        <taxon>Endopterygota</taxon>
        <taxon>Diptera</taxon>
        <taxon>Brachycera</taxon>
        <taxon>Muscomorpha</taxon>
        <taxon>Ephydroidea</taxon>
        <taxon>Drosophilidae</taxon>
        <taxon>Drosophila</taxon>
        <taxon>Sophophora</taxon>
    </lineage>
</organism>
<sequence>MSHAIDELQAIIADLKTELETEPKSSGGVASNSRLARDRIDRMSAEVVDSNPYSRLMALQRMNIVKDYERIRYKAVAIVGVGGVGSVTADMLTRCGIGKLILFDYDKVELANMNRLFFTPDQAGLSKVAAAAATLSFINPDVEIETHNYNITTVENFDRFLDTISQGGRIAGQPVDLVLSCVDNFEARMAINAACNERNLNWFESGVSENAVSGHIQFIRPGDTACFACAPPLVVAENIDEKTLKREGVCAASLPTTMGITAGFLVQNALKYLLNFGEVSDYLGYNALSDFFPKMTLKPNPQCDDRNCLVRQKEFQARPKPVLIEEKAVSEEPLHATNEWGIELVAEDAPESNTTPAETPVMGEGLRLAYEAPEKSSETSEETVSAATADETSLEDLMAQMKSM</sequence>
<protein>
    <recommendedName>
        <fullName evidence="8">Ubiquitin-like modifier-activating enzyme 5</fullName>
        <shortName evidence="7">Ubiquitin-activating enzyme 5</shortName>
    </recommendedName>
    <alternativeName>
        <fullName evidence="8">UFM1-activating enzyme</fullName>
    </alternativeName>
</protein>
<keyword id="KW-0067">ATP-binding</keyword>
<keyword id="KW-0963">Cytoplasm</keyword>
<keyword id="KW-0333">Golgi apparatus</keyword>
<keyword id="KW-0479">Metal-binding</keyword>
<keyword id="KW-0547">Nucleotide-binding</keyword>
<keyword id="KW-0539">Nucleus</keyword>
<keyword id="KW-1185">Reference proteome</keyword>
<keyword id="KW-0833">Ubl conjugation pathway</keyword>
<keyword id="KW-0862">Zinc</keyword>